<accession>Q2ILX2</accession>
<keyword id="KW-0030">Aminoacyl-tRNA synthetase</keyword>
<keyword id="KW-0067">ATP-binding</keyword>
<keyword id="KW-0963">Cytoplasm</keyword>
<keyword id="KW-0436">Ligase</keyword>
<keyword id="KW-0547">Nucleotide-binding</keyword>
<keyword id="KW-0648">Protein biosynthesis</keyword>
<keyword id="KW-1185">Reference proteome</keyword>
<sequence>MSDASAETAIRPTRAENFSEWYLEVIKAADLAESSSVRGCMVIKPWGYALWEHVQRVLDGMFKATGHVNAYFPLFIPLSLLEKEAAHVEGFAKECAVVTHHRLEARDGKLVPVGELEEPLIVRPTSETIIGESFARWVQSYRDLPLLINQWANVVRWEMRTRMFLRTAEFLWQEGHTAHATEPEAIDETMQMLGIYARFAEEWMALPVVQGEKTESERFPGAVRTYCIEAMMQDRKALQAGTSHFLGQNFAKASGIQFQDEKGTLTHAWTTSWGLSTRMIGAMIMTHGDDDGMVCPPRLAPQQVVIIPVIQKPEVREQVLAWCTALKRELEAQTYAGAPVRVHLDARDLQGAKKSWEWIKKGTPVRLEVGPRDIEKGAVFMGRRDRKPREKQSVPRAELVAGVGALLQEIQDALLERARTMRAAHTRVIDTKDEFYAYFTPPPTRRPNDPTPIHGGFALAHFAGDPAVEARIKEDLGVTVRCIPLEPGEPGTCAFTGQPSPKRVVWAKSY</sequence>
<reference key="1">
    <citation type="submission" date="2006-01" db="EMBL/GenBank/DDBJ databases">
        <title>Complete sequence of Anaeromyxobacter dehalogenans 2CP-C.</title>
        <authorList>
            <person name="Copeland A."/>
            <person name="Lucas S."/>
            <person name="Lapidus A."/>
            <person name="Barry K."/>
            <person name="Detter J.C."/>
            <person name="Glavina T."/>
            <person name="Hammon N."/>
            <person name="Israni S."/>
            <person name="Pitluck S."/>
            <person name="Brettin T."/>
            <person name="Bruce D."/>
            <person name="Han C."/>
            <person name="Tapia R."/>
            <person name="Gilna P."/>
            <person name="Kiss H."/>
            <person name="Schmutz J."/>
            <person name="Larimer F."/>
            <person name="Land M."/>
            <person name="Kyrpides N."/>
            <person name="Anderson I."/>
            <person name="Sanford R.A."/>
            <person name="Ritalahti K.M."/>
            <person name="Thomas H.S."/>
            <person name="Kirby J.R."/>
            <person name="Zhulin I.B."/>
            <person name="Loeffler F.E."/>
            <person name="Richardson P."/>
        </authorList>
    </citation>
    <scope>NUCLEOTIDE SEQUENCE [LARGE SCALE GENOMIC DNA]</scope>
    <source>
        <strain>2CP-C</strain>
    </source>
</reference>
<evidence type="ECO:0000255" key="1">
    <source>
        <dbReference type="HAMAP-Rule" id="MF_01571"/>
    </source>
</evidence>
<dbReference type="EC" id="6.1.1.15" evidence="1"/>
<dbReference type="EMBL" id="CP000251">
    <property type="protein sequence ID" value="ABC79802.1"/>
    <property type="molecule type" value="Genomic_DNA"/>
</dbReference>
<dbReference type="RefSeq" id="WP_011419085.1">
    <property type="nucleotide sequence ID" value="NC_007760.1"/>
</dbReference>
<dbReference type="SMR" id="Q2ILX2"/>
<dbReference type="STRING" id="290397.Adeh_0024"/>
<dbReference type="KEGG" id="ade:Adeh_0024"/>
<dbReference type="eggNOG" id="COG0442">
    <property type="taxonomic scope" value="Bacteria"/>
</dbReference>
<dbReference type="HOGENOM" id="CLU_001882_4_2_7"/>
<dbReference type="OrthoDB" id="9809052at2"/>
<dbReference type="Proteomes" id="UP000001935">
    <property type="component" value="Chromosome"/>
</dbReference>
<dbReference type="GO" id="GO:0017101">
    <property type="term" value="C:aminoacyl-tRNA synthetase multienzyme complex"/>
    <property type="evidence" value="ECO:0007669"/>
    <property type="project" value="TreeGrafter"/>
</dbReference>
<dbReference type="GO" id="GO:0005737">
    <property type="term" value="C:cytoplasm"/>
    <property type="evidence" value="ECO:0007669"/>
    <property type="project" value="UniProtKB-SubCell"/>
</dbReference>
<dbReference type="GO" id="GO:0005524">
    <property type="term" value="F:ATP binding"/>
    <property type="evidence" value="ECO:0007669"/>
    <property type="project" value="UniProtKB-UniRule"/>
</dbReference>
<dbReference type="GO" id="GO:0004827">
    <property type="term" value="F:proline-tRNA ligase activity"/>
    <property type="evidence" value="ECO:0007669"/>
    <property type="project" value="UniProtKB-UniRule"/>
</dbReference>
<dbReference type="GO" id="GO:0006433">
    <property type="term" value="P:prolyl-tRNA aminoacylation"/>
    <property type="evidence" value="ECO:0007669"/>
    <property type="project" value="UniProtKB-UniRule"/>
</dbReference>
<dbReference type="CDD" id="cd00778">
    <property type="entry name" value="ProRS_core_arch_euk"/>
    <property type="match status" value="1"/>
</dbReference>
<dbReference type="FunFam" id="3.30.930.10:FF:000023">
    <property type="entry name" value="Proline--tRNA ligase"/>
    <property type="match status" value="1"/>
</dbReference>
<dbReference type="Gene3D" id="3.40.50.800">
    <property type="entry name" value="Anticodon-binding domain"/>
    <property type="match status" value="1"/>
</dbReference>
<dbReference type="Gene3D" id="3.30.930.10">
    <property type="entry name" value="Bira Bifunctional Protein, Domain 2"/>
    <property type="match status" value="1"/>
</dbReference>
<dbReference type="Gene3D" id="3.30.110.30">
    <property type="entry name" value="C-terminal domain of ProRS"/>
    <property type="match status" value="1"/>
</dbReference>
<dbReference type="HAMAP" id="MF_01571">
    <property type="entry name" value="Pro_tRNA_synth_type3"/>
    <property type="match status" value="1"/>
</dbReference>
<dbReference type="InterPro" id="IPR002314">
    <property type="entry name" value="aa-tRNA-synt_IIb"/>
</dbReference>
<dbReference type="InterPro" id="IPR006195">
    <property type="entry name" value="aa-tRNA-synth_II"/>
</dbReference>
<dbReference type="InterPro" id="IPR045864">
    <property type="entry name" value="aa-tRNA-synth_II/BPL/LPL"/>
</dbReference>
<dbReference type="InterPro" id="IPR004154">
    <property type="entry name" value="Anticodon-bd"/>
</dbReference>
<dbReference type="InterPro" id="IPR036621">
    <property type="entry name" value="Anticodon-bd_dom_sf"/>
</dbReference>
<dbReference type="InterPro" id="IPR004499">
    <property type="entry name" value="Pro-tRNA-ligase_IIa_arc-type"/>
</dbReference>
<dbReference type="InterPro" id="IPR016061">
    <property type="entry name" value="Pro-tRNA_ligase_II_C"/>
</dbReference>
<dbReference type="InterPro" id="IPR017449">
    <property type="entry name" value="Pro-tRNA_synth_II"/>
</dbReference>
<dbReference type="InterPro" id="IPR033721">
    <property type="entry name" value="ProRS_core_arch_euk"/>
</dbReference>
<dbReference type="NCBIfam" id="TIGR00408">
    <property type="entry name" value="proS_fam_I"/>
    <property type="match status" value="1"/>
</dbReference>
<dbReference type="PANTHER" id="PTHR43382:SF2">
    <property type="entry name" value="BIFUNCTIONAL GLUTAMATE_PROLINE--TRNA LIGASE"/>
    <property type="match status" value="1"/>
</dbReference>
<dbReference type="PANTHER" id="PTHR43382">
    <property type="entry name" value="PROLYL-TRNA SYNTHETASE"/>
    <property type="match status" value="1"/>
</dbReference>
<dbReference type="Pfam" id="PF03129">
    <property type="entry name" value="HGTP_anticodon"/>
    <property type="match status" value="1"/>
</dbReference>
<dbReference type="Pfam" id="PF09180">
    <property type="entry name" value="ProRS-C_1"/>
    <property type="match status" value="1"/>
</dbReference>
<dbReference type="Pfam" id="PF00587">
    <property type="entry name" value="tRNA-synt_2b"/>
    <property type="match status" value="1"/>
</dbReference>
<dbReference type="SMART" id="SM00946">
    <property type="entry name" value="ProRS-C_1"/>
    <property type="match status" value="1"/>
</dbReference>
<dbReference type="SUPFAM" id="SSF64586">
    <property type="entry name" value="C-terminal domain of ProRS"/>
    <property type="match status" value="1"/>
</dbReference>
<dbReference type="SUPFAM" id="SSF52954">
    <property type="entry name" value="Class II aaRS ABD-related"/>
    <property type="match status" value="1"/>
</dbReference>
<dbReference type="SUPFAM" id="SSF55681">
    <property type="entry name" value="Class II aaRS and biotin synthetases"/>
    <property type="match status" value="1"/>
</dbReference>
<dbReference type="PROSITE" id="PS50862">
    <property type="entry name" value="AA_TRNA_LIGASE_II"/>
    <property type="match status" value="1"/>
</dbReference>
<protein>
    <recommendedName>
        <fullName evidence="1">Proline--tRNA ligase 2</fullName>
        <ecNumber evidence="1">6.1.1.15</ecNumber>
    </recommendedName>
    <alternativeName>
        <fullName evidence="1">Prolyl-tRNA synthetase 2</fullName>
        <shortName evidence="1">ProRS 2</shortName>
    </alternativeName>
</protein>
<comment type="function">
    <text evidence="1">Catalyzes the attachment of proline to tRNA(Pro) in a two-step reaction: proline is first activated by ATP to form Pro-AMP and then transferred to the acceptor end of tRNA(Pro).</text>
</comment>
<comment type="catalytic activity">
    <reaction evidence="1">
        <text>tRNA(Pro) + L-proline + ATP = L-prolyl-tRNA(Pro) + AMP + diphosphate</text>
        <dbReference type="Rhea" id="RHEA:14305"/>
        <dbReference type="Rhea" id="RHEA-COMP:9700"/>
        <dbReference type="Rhea" id="RHEA-COMP:9702"/>
        <dbReference type="ChEBI" id="CHEBI:30616"/>
        <dbReference type="ChEBI" id="CHEBI:33019"/>
        <dbReference type="ChEBI" id="CHEBI:60039"/>
        <dbReference type="ChEBI" id="CHEBI:78442"/>
        <dbReference type="ChEBI" id="CHEBI:78532"/>
        <dbReference type="ChEBI" id="CHEBI:456215"/>
        <dbReference type="EC" id="6.1.1.15"/>
    </reaction>
</comment>
<comment type="subunit">
    <text evidence="1">Homodimer.</text>
</comment>
<comment type="subcellular location">
    <subcellularLocation>
        <location evidence="1">Cytoplasm</location>
    </subcellularLocation>
</comment>
<comment type="domain">
    <text evidence="1">Consists of three domains: the N-terminal catalytic domain, the anticodon-binding domain and the C-terminal extension.</text>
</comment>
<comment type="similarity">
    <text evidence="1">Belongs to the class-II aminoacyl-tRNA synthetase family. ProS type 3 subfamily.</text>
</comment>
<gene>
    <name evidence="1" type="primary">proS2</name>
    <name type="ordered locus">Adeh_0024</name>
</gene>
<organism>
    <name type="scientific">Anaeromyxobacter dehalogenans (strain 2CP-C)</name>
    <dbReference type="NCBI Taxonomy" id="290397"/>
    <lineage>
        <taxon>Bacteria</taxon>
        <taxon>Pseudomonadati</taxon>
        <taxon>Myxococcota</taxon>
        <taxon>Myxococcia</taxon>
        <taxon>Myxococcales</taxon>
        <taxon>Cystobacterineae</taxon>
        <taxon>Anaeromyxobacteraceae</taxon>
        <taxon>Anaeromyxobacter</taxon>
    </lineage>
</organism>
<name>SYP2_ANADE</name>
<proteinExistence type="inferred from homology"/>
<feature type="chain" id="PRO_0000249114" description="Proline--tRNA ligase 2">
    <location>
        <begin position="1"/>
        <end position="510"/>
    </location>
</feature>